<reference key="1">
    <citation type="journal article" date="1997" name="Nature">
        <title>The complete genome sequence of the hyperthermophilic, sulphate-reducing archaeon Archaeoglobus fulgidus.</title>
        <authorList>
            <person name="Klenk H.-P."/>
            <person name="Clayton R.A."/>
            <person name="Tomb J.-F."/>
            <person name="White O."/>
            <person name="Nelson K.E."/>
            <person name="Ketchum K.A."/>
            <person name="Dodson R.J."/>
            <person name="Gwinn M.L."/>
            <person name="Hickey E.K."/>
            <person name="Peterson J.D."/>
            <person name="Richardson D.L."/>
            <person name="Kerlavage A.R."/>
            <person name="Graham D.E."/>
            <person name="Kyrpides N.C."/>
            <person name="Fleischmann R.D."/>
            <person name="Quackenbush J."/>
            <person name="Lee N.H."/>
            <person name="Sutton G.G."/>
            <person name="Gill S.R."/>
            <person name="Kirkness E.F."/>
            <person name="Dougherty B.A."/>
            <person name="McKenney K."/>
            <person name="Adams M.D."/>
            <person name="Loftus B.J."/>
            <person name="Peterson S.N."/>
            <person name="Reich C.I."/>
            <person name="McNeil L.K."/>
            <person name="Badger J.H."/>
            <person name="Glodek A."/>
            <person name="Zhou L."/>
            <person name="Overbeek R."/>
            <person name="Gocayne J.D."/>
            <person name="Weidman J.F."/>
            <person name="McDonald L.A."/>
            <person name="Utterback T.R."/>
            <person name="Cotton M.D."/>
            <person name="Spriggs T."/>
            <person name="Artiach P."/>
            <person name="Kaine B.P."/>
            <person name="Sykes S.M."/>
            <person name="Sadow P.W."/>
            <person name="D'Andrea K.P."/>
            <person name="Bowman C."/>
            <person name="Fujii C."/>
            <person name="Garland S.A."/>
            <person name="Mason T.M."/>
            <person name="Olsen G.J."/>
            <person name="Fraser C.M."/>
            <person name="Smith H.O."/>
            <person name="Woese C.R."/>
            <person name="Venter J.C."/>
        </authorList>
    </citation>
    <scope>NUCLEOTIDE SEQUENCE [LARGE SCALE GENOMIC DNA]</scope>
    <source>
        <strain>ATCC 49558 / DSM 4304 / JCM 9628 / NBRC 100126 / VC-16</strain>
    </source>
</reference>
<proteinExistence type="inferred from homology"/>
<evidence type="ECO:0000250" key="1"/>
<evidence type="ECO:0000255" key="2"/>
<evidence type="ECO:0000305" key="3"/>
<accession>O30237</accession>
<feature type="chain" id="PRO_0000416949" description="CRISPR-associated endoribonuclease Cas2 2">
    <location>
        <begin position="1"/>
        <end position="92"/>
    </location>
</feature>
<feature type="binding site" evidence="2">
    <location>
        <position position="12"/>
    </location>
    <ligand>
        <name>Mg(2+)</name>
        <dbReference type="ChEBI" id="CHEBI:18420"/>
        <note>catalytic</note>
    </ligand>
</feature>
<keyword id="KW-0051">Antiviral defense</keyword>
<keyword id="KW-0255">Endonuclease</keyword>
<keyword id="KW-0378">Hydrolase</keyword>
<keyword id="KW-0460">Magnesium</keyword>
<keyword id="KW-0479">Metal-binding</keyword>
<keyword id="KW-0540">Nuclease</keyword>
<keyword id="KW-1185">Reference proteome</keyword>
<gene>
    <name type="primary">cas22</name>
    <name type="ordered locus">AF_2434</name>
</gene>
<name>CAS2B_ARCFU</name>
<dbReference type="EC" id="3.1.-.-"/>
<dbReference type="EMBL" id="AE000782">
    <property type="protein sequence ID" value="AAB91229.1"/>
    <property type="molecule type" value="Genomic_DNA"/>
</dbReference>
<dbReference type="PIR" id="C69554">
    <property type="entry name" value="C69554"/>
</dbReference>
<dbReference type="SMR" id="O30237"/>
<dbReference type="STRING" id="224325.AF_2434"/>
<dbReference type="PaxDb" id="224325-AF_2434"/>
<dbReference type="DNASU" id="1485665"/>
<dbReference type="EnsemblBacteria" id="AAB91229">
    <property type="protein sequence ID" value="AAB91229"/>
    <property type="gene ID" value="AF_2434"/>
</dbReference>
<dbReference type="KEGG" id="afu:AF_2434"/>
<dbReference type="eggNOG" id="arCOG04194">
    <property type="taxonomic scope" value="Archaea"/>
</dbReference>
<dbReference type="HOGENOM" id="CLU_161124_0_1_2"/>
<dbReference type="OrthoDB" id="43236at2157"/>
<dbReference type="PhylomeDB" id="O30237"/>
<dbReference type="Proteomes" id="UP000002199">
    <property type="component" value="Chromosome"/>
</dbReference>
<dbReference type="GO" id="GO:0046872">
    <property type="term" value="F:metal ion binding"/>
    <property type="evidence" value="ECO:0007669"/>
    <property type="project" value="UniProtKB-UniRule"/>
</dbReference>
<dbReference type="GO" id="GO:0004521">
    <property type="term" value="F:RNA endonuclease activity"/>
    <property type="evidence" value="ECO:0007669"/>
    <property type="project" value="InterPro"/>
</dbReference>
<dbReference type="GO" id="GO:0051607">
    <property type="term" value="P:defense response to virus"/>
    <property type="evidence" value="ECO:0007669"/>
    <property type="project" value="UniProtKB-UniRule"/>
</dbReference>
<dbReference type="GO" id="GO:0043571">
    <property type="term" value="P:maintenance of CRISPR repeat elements"/>
    <property type="evidence" value="ECO:0007669"/>
    <property type="project" value="UniProtKB-UniRule"/>
</dbReference>
<dbReference type="CDD" id="cd09725">
    <property type="entry name" value="Cas2_I_II_III"/>
    <property type="match status" value="1"/>
</dbReference>
<dbReference type="Gene3D" id="3.30.70.240">
    <property type="match status" value="1"/>
</dbReference>
<dbReference type="HAMAP" id="MF_01471">
    <property type="entry name" value="Cas2"/>
    <property type="match status" value="1"/>
</dbReference>
<dbReference type="InterPro" id="IPR021127">
    <property type="entry name" value="CRISPR_associated_Cas2"/>
</dbReference>
<dbReference type="InterPro" id="IPR019199">
    <property type="entry name" value="Virulence_VapD/CRISPR_Cas2"/>
</dbReference>
<dbReference type="NCBIfam" id="TIGR01573">
    <property type="entry name" value="cas2"/>
    <property type="match status" value="1"/>
</dbReference>
<dbReference type="PANTHER" id="PTHR34405">
    <property type="entry name" value="CRISPR-ASSOCIATED ENDORIBONUCLEASE CAS2"/>
    <property type="match status" value="1"/>
</dbReference>
<dbReference type="PANTHER" id="PTHR34405:SF1">
    <property type="entry name" value="CRISPR-ASSOCIATED ENDORIBONUCLEASE CAS2"/>
    <property type="match status" value="1"/>
</dbReference>
<dbReference type="Pfam" id="PF09827">
    <property type="entry name" value="CRISPR_Cas2"/>
    <property type="match status" value="1"/>
</dbReference>
<dbReference type="SUPFAM" id="SSF143430">
    <property type="entry name" value="TTP0101/SSO1404-like"/>
    <property type="match status" value="1"/>
</dbReference>
<protein>
    <recommendedName>
        <fullName>CRISPR-associated endoribonuclease Cas2 2</fullName>
        <ecNumber>3.1.-.-</ecNumber>
    </recommendedName>
</protein>
<organism>
    <name type="scientific">Archaeoglobus fulgidus (strain ATCC 49558 / DSM 4304 / JCM 9628 / NBRC 100126 / VC-16)</name>
    <dbReference type="NCBI Taxonomy" id="224325"/>
    <lineage>
        <taxon>Archaea</taxon>
        <taxon>Methanobacteriati</taxon>
        <taxon>Methanobacteriota</taxon>
        <taxon>Archaeoglobi</taxon>
        <taxon>Archaeoglobales</taxon>
        <taxon>Archaeoglobaceae</taxon>
        <taxon>Archaeoglobus</taxon>
    </lineage>
</organism>
<comment type="function">
    <text evidence="1">CRISPR (clustered regularly interspaced short palindromic repeat), is an adaptive immune system that provides protection against mobile genetic elements (viruses, transposable elements and conjugative plasmids). CRISPR clusters contain sequences complementary to antecedent mobile elements and target invading nucleic acids. CRISPR clusters are transcribed and processed into CRISPR RNA (crRNA). Functions as a ssRNA-specific endoribonuclease. Involved in the integration of spacer DNA into the CRISPR cassette (By similarity).</text>
</comment>
<comment type="cofactor">
    <cofactor evidence="1">
        <name>Mg(2+)</name>
        <dbReference type="ChEBI" id="CHEBI:18420"/>
    </cofactor>
</comment>
<comment type="subunit">
    <text evidence="1">Homodimer, forms a heterotetramer with a Cas1 homodimer.</text>
</comment>
<comment type="similarity">
    <text evidence="3">Belongs to the CRISPR-associated endoribonuclease Cas2 protein family.</text>
</comment>
<sequence length="92" mass="10730">MVVIVYVIVAYDVNVERVNRVKKFLRRYLNWVQNSLFEGELSSADLEEVKMGLREIINEDEDMVVIYRFRSADAFKREVMGIEKGLGGEEVI</sequence>